<comment type="function">
    <text evidence="1">The beta subunit is responsible for the synthesis of L-tryptophan from indole and L-serine.</text>
</comment>
<comment type="catalytic activity">
    <reaction>
        <text>(1S,2R)-1-C-(indol-3-yl)glycerol 3-phosphate + L-serine = D-glyceraldehyde 3-phosphate + L-tryptophan + H2O</text>
        <dbReference type="Rhea" id="RHEA:10532"/>
        <dbReference type="ChEBI" id="CHEBI:15377"/>
        <dbReference type="ChEBI" id="CHEBI:33384"/>
        <dbReference type="ChEBI" id="CHEBI:57912"/>
        <dbReference type="ChEBI" id="CHEBI:58866"/>
        <dbReference type="ChEBI" id="CHEBI:59776"/>
        <dbReference type="EC" id="4.2.1.20"/>
    </reaction>
</comment>
<comment type="cofactor">
    <cofactor evidence="1">
        <name>pyridoxal 5'-phosphate</name>
        <dbReference type="ChEBI" id="CHEBI:597326"/>
    </cofactor>
</comment>
<comment type="pathway">
    <text>Amino-acid biosynthesis; L-tryptophan biosynthesis; L-tryptophan from chorismate: step 5/5.</text>
</comment>
<comment type="subunit">
    <text evidence="1">Tetramer of two alpha and two beta chains.</text>
</comment>
<comment type="similarity">
    <text evidence="2">Belongs to the TrpB family.</text>
</comment>
<name>TRPB1_WOLSU</name>
<sequence>MMHKPYLKSFPNKEGYFGKYGGAYLPPLLIEHFKEIGEAYLKISQSFDFIQELKSIRKHYQGRPTPLYYARRLSQKAGGAAIYLKREDLNHTGAHKLNHCMAEALLAKHLGKKKLIAETGAGQHGVALATAAAYFGMECEIHMGEVDIAKEHPNVIRMKMLGAKVVPVSFGERTLKEAVDSAFEAYLKDPANAIYAIGSVVGPHPFPKMVRDFQSVVGAEAKEQFLEMTGELPDHIVACVGGGSNAMGIFSAFIDDPVELWGVEPLGKGKSLGEHAASLSYGKEGVMHGFNSIMLQNEDGSPASVHSVASGLDYPSVGPEHAYLHEIGRTHSVGVSDEEAIKNFFALSRLEGIIPAIESAHAIAYGMKLAKERLGEKILINLSGRGDKDIDYVSETFGFGGEE</sequence>
<feature type="chain" id="PRO_0000099023" description="Tryptophan synthase beta chain 1">
    <location>
        <begin position="1"/>
        <end position="403"/>
    </location>
</feature>
<feature type="modified residue" description="N6-(pyridoxal phosphate)lysine" evidence="1">
    <location>
        <position position="96"/>
    </location>
</feature>
<accession>Q7M9S1</accession>
<dbReference type="EC" id="4.2.1.20"/>
<dbReference type="EMBL" id="BX571658">
    <property type="protein sequence ID" value="CAE09842.1"/>
    <property type="molecule type" value="Genomic_DNA"/>
</dbReference>
<dbReference type="SMR" id="Q7M9S1"/>
<dbReference type="STRING" id="273121.WS0719"/>
<dbReference type="KEGG" id="wsu:WS0719"/>
<dbReference type="eggNOG" id="COG0133">
    <property type="taxonomic scope" value="Bacteria"/>
</dbReference>
<dbReference type="HOGENOM" id="CLU_016734_3_1_7"/>
<dbReference type="UniPathway" id="UPA00035">
    <property type="reaction ID" value="UER00044"/>
</dbReference>
<dbReference type="Proteomes" id="UP000000422">
    <property type="component" value="Chromosome"/>
</dbReference>
<dbReference type="GO" id="GO:0005737">
    <property type="term" value="C:cytoplasm"/>
    <property type="evidence" value="ECO:0007669"/>
    <property type="project" value="TreeGrafter"/>
</dbReference>
<dbReference type="GO" id="GO:0004834">
    <property type="term" value="F:tryptophan synthase activity"/>
    <property type="evidence" value="ECO:0007669"/>
    <property type="project" value="UniProtKB-UniRule"/>
</dbReference>
<dbReference type="CDD" id="cd06446">
    <property type="entry name" value="Trp-synth_B"/>
    <property type="match status" value="1"/>
</dbReference>
<dbReference type="FunFam" id="3.40.50.1100:FF:000004">
    <property type="entry name" value="Tryptophan synthase beta chain"/>
    <property type="match status" value="1"/>
</dbReference>
<dbReference type="Gene3D" id="3.40.50.1100">
    <property type="match status" value="2"/>
</dbReference>
<dbReference type="HAMAP" id="MF_00133">
    <property type="entry name" value="Trp_synth_beta"/>
    <property type="match status" value="1"/>
</dbReference>
<dbReference type="InterPro" id="IPR006653">
    <property type="entry name" value="Trp_synth_b_CS"/>
</dbReference>
<dbReference type="InterPro" id="IPR006654">
    <property type="entry name" value="Trp_synth_beta"/>
</dbReference>
<dbReference type="InterPro" id="IPR023026">
    <property type="entry name" value="Trp_synth_beta/beta-like"/>
</dbReference>
<dbReference type="InterPro" id="IPR001926">
    <property type="entry name" value="TrpB-like_PALP"/>
</dbReference>
<dbReference type="InterPro" id="IPR036052">
    <property type="entry name" value="TrpB-like_PALP_sf"/>
</dbReference>
<dbReference type="NCBIfam" id="TIGR00263">
    <property type="entry name" value="trpB"/>
    <property type="match status" value="1"/>
</dbReference>
<dbReference type="PANTHER" id="PTHR48077:SF3">
    <property type="entry name" value="TRYPTOPHAN SYNTHASE"/>
    <property type="match status" value="1"/>
</dbReference>
<dbReference type="PANTHER" id="PTHR48077">
    <property type="entry name" value="TRYPTOPHAN SYNTHASE-RELATED"/>
    <property type="match status" value="1"/>
</dbReference>
<dbReference type="Pfam" id="PF00291">
    <property type="entry name" value="PALP"/>
    <property type="match status" value="1"/>
</dbReference>
<dbReference type="PIRSF" id="PIRSF001413">
    <property type="entry name" value="Trp_syn_beta"/>
    <property type="match status" value="1"/>
</dbReference>
<dbReference type="SUPFAM" id="SSF53686">
    <property type="entry name" value="Tryptophan synthase beta subunit-like PLP-dependent enzymes"/>
    <property type="match status" value="1"/>
</dbReference>
<dbReference type="PROSITE" id="PS00168">
    <property type="entry name" value="TRP_SYNTHASE_BETA"/>
    <property type="match status" value="1"/>
</dbReference>
<gene>
    <name type="primary">trpB1</name>
    <name type="ordered locus">WS0719</name>
</gene>
<protein>
    <recommendedName>
        <fullName>Tryptophan synthase beta chain 1</fullName>
        <ecNumber>4.2.1.20</ecNumber>
    </recommendedName>
</protein>
<keyword id="KW-0028">Amino-acid biosynthesis</keyword>
<keyword id="KW-0057">Aromatic amino acid biosynthesis</keyword>
<keyword id="KW-0456">Lyase</keyword>
<keyword id="KW-0663">Pyridoxal phosphate</keyword>
<keyword id="KW-1185">Reference proteome</keyword>
<keyword id="KW-0822">Tryptophan biosynthesis</keyword>
<proteinExistence type="inferred from homology"/>
<reference key="1">
    <citation type="journal article" date="2003" name="Proc. Natl. Acad. Sci. U.S.A.">
        <title>Complete genome sequence and analysis of Wolinella succinogenes.</title>
        <authorList>
            <person name="Baar C."/>
            <person name="Eppinger M."/>
            <person name="Raddatz G."/>
            <person name="Simon J."/>
            <person name="Lanz C."/>
            <person name="Klimmek O."/>
            <person name="Nandakumar R."/>
            <person name="Gross R."/>
            <person name="Rosinus A."/>
            <person name="Keller H."/>
            <person name="Jagtap P."/>
            <person name="Linke B."/>
            <person name="Meyer F."/>
            <person name="Lederer H."/>
            <person name="Schuster S.C."/>
        </authorList>
    </citation>
    <scope>NUCLEOTIDE SEQUENCE [LARGE SCALE GENOMIC DNA]</scope>
    <source>
        <strain>ATCC 29543 / DSM 1740 / CCUG 13145 / JCM 31913 / LMG 7466 / NCTC 11488 / FDC 602W</strain>
    </source>
</reference>
<evidence type="ECO:0000250" key="1"/>
<evidence type="ECO:0000305" key="2"/>
<organism>
    <name type="scientific">Wolinella succinogenes (strain ATCC 29543 / DSM 1740 / CCUG 13145 / JCM 31913 / LMG 7466 / NCTC 11488 / FDC 602W)</name>
    <name type="common">Vibrio succinogenes</name>
    <dbReference type="NCBI Taxonomy" id="273121"/>
    <lineage>
        <taxon>Bacteria</taxon>
        <taxon>Pseudomonadati</taxon>
        <taxon>Campylobacterota</taxon>
        <taxon>Epsilonproteobacteria</taxon>
        <taxon>Campylobacterales</taxon>
        <taxon>Helicobacteraceae</taxon>
        <taxon>Wolinella</taxon>
    </lineage>
</organism>